<evidence type="ECO:0000255" key="1">
    <source>
        <dbReference type="HAMAP-Rule" id="MF_01023"/>
    </source>
</evidence>
<dbReference type="EC" id="2.6.1.9" evidence="1"/>
<dbReference type="EMBL" id="CP000094">
    <property type="protein sequence ID" value="ABA75812.1"/>
    <property type="molecule type" value="Genomic_DNA"/>
</dbReference>
<dbReference type="RefSeq" id="WP_011335371.1">
    <property type="nucleotide sequence ID" value="NC_007492.2"/>
</dbReference>
<dbReference type="SMR" id="Q3K8U2"/>
<dbReference type="KEGG" id="pfo:Pfl01_4075"/>
<dbReference type="eggNOG" id="COG0079">
    <property type="taxonomic scope" value="Bacteria"/>
</dbReference>
<dbReference type="HOGENOM" id="CLU_017584_3_3_6"/>
<dbReference type="UniPathway" id="UPA00031">
    <property type="reaction ID" value="UER00012"/>
</dbReference>
<dbReference type="Proteomes" id="UP000002704">
    <property type="component" value="Chromosome"/>
</dbReference>
<dbReference type="GO" id="GO:0004400">
    <property type="term" value="F:histidinol-phosphate transaminase activity"/>
    <property type="evidence" value="ECO:0007669"/>
    <property type="project" value="UniProtKB-UniRule"/>
</dbReference>
<dbReference type="GO" id="GO:0030170">
    <property type="term" value="F:pyridoxal phosphate binding"/>
    <property type="evidence" value="ECO:0007669"/>
    <property type="project" value="InterPro"/>
</dbReference>
<dbReference type="GO" id="GO:0000105">
    <property type="term" value="P:L-histidine biosynthetic process"/>
    <property type="evidence" value="ECO:0007669"/>
    <property type="project" value="UniProtKB-UniRule"/>
</dbReference>
<dbReference type="CDD" id="cd00609">
    <property type="entry name" value="AAT_like"/>
    <property type="match status" value="1"/>
</dbReference>
<dbReference type="Gene3D" id="3.90.1150.10">
    <property type="entry name" value="Aspartate Aminotransferase, domain 1"/>
    <property type="match status" value="1"/>
</dbReference>
<dbReference type="Gene3D" id="3.40.640.10">
    <property type="entry name" value="Type I PLP-dependent aspartate aminotransferase-like (Major domain)"/>
    <property type="match status" value="1"/>
</dbReference>
<dbReference type="HAMAP" id="MF_01023">
    <property type="entry name" value="HisC_aminotrans_2"/>
    <property type="match status" value="1"/>
</dbReference>
<dbReference type="InterPro" id="IPR001917">
    <property type="entry name" value="Aminotrans_II_pyridoxalP_BS"/>
</dbReference>
<dbReference type="InterPro" id="IPR004839">
    <property type="entry name" value="Aminotransferase_I/II_large"/>
</dbReference>
<dbReference type="InterPro" id="IPR005861">
    <property type="entry name" value="HisP_aminotrans"/>
</dbReference>
<dbReference type="InterPro" id="IPR050106">
    <property type="entry name" value="HistidinolP_aminotransfase"/>
</dbReference>
<dbReference type="InterPro" id="IPR015424">
    <property type="entry name" value="PyrdxlP-dep_Trfase"/>
</dbReference>
<dbReference type="InterPro" id="IPR015421">
    <property type="entry name" value="PyrdxlP-dep_Trfase_major"/>
</dbReference>
<dbReference type="InterPro" id="IPR015422">
    <property type="entry name" value="PyrdxlP-dep_Trfase_small"/>
</dbReference>
<dbReference type="NCBIfam" id="TIGR01141">
    <property type="entry name" value="hisC"/>
    <property type="match status" value="1"/>
</dbReference>
<dbReference type="PANTHER" id="PTHR43643:SF3">
    <property type="entry name" value="HISTIDINOL-PHOSPHATE AMINOTRANSFERASE"/>
    <property type="match status" value="1"/>
</dbReference>
<dbReference type="PANTHER" id="PTHR43643">
    <property type="entry name" value="HISTIDINOL-PHOSPHATE AMINOTRANSFERASE 2"/>
    <property type="match status" value="1"/>
</dbReference>
<dbReference type="Pfam" id="PF00155">
    <property type="entry name" value="Aminotran_1_2"/>
    <property type="match status" value="1"/>
</dbReference>
<dbReference type="SUPFAM" id="SSF53383">
    <property type="entry name" value="PLP-dependent transferases"/>
    <property type="match status" value="1"/>
</dbReference>
<dbReference type="PROSITE" id="PS00599">
    <property type="entry name" value="AA_TRANSFER_CLASS_2"/>
    <property type="match status" value="1"/>
</dbReference>
<sequence>MSGNFLALAQPGVQQLSPYVPGKPVDELARELDLDPASIVKLASNENPLGASPKALAAIREALDELTRYPDGNGFALKSLLAEQCRVELNQVTLGNGSNDILELVARAYLAPGLNAVFSEHAFAVYPIATQAVGAQAKVVPAKEWGHDLPAMLAAIDANTRVVFIANPNNPTGTWFGAEALDDFLQDVPEHVLVVLDEAYIEYAEGSDLPDGLDFLAAYPNLLVSRTFSKAYGLAALRVGYGLSTPVVADVLNRVRQPFNVNSLALAAACAALKDEEYLAQSRQLNESGMQQLEAGFRELGLSWIPSKGNFICVDLGQVAAPVFQGLLREGVIVRPVANYGMPNHLRVTIGLPAENSRFLEALRKVLARG</sequence>
<reference key="1">
    <citation type="journal article" date="2009" name="Genome Biol.">
        <title>Genomic and genetic analyses of diversity and plant interactions of Pseudomonas fluorescens.</title>
        <authorList>
            <person name="Silby M.W."/>
            <person name="Cerdeno-Tarraga A.M."/>
            <person name="Vernikos G.S."/>
            <person name="Giddens S.R."/>
            <person name="Jackson R.W."/>
            <person name="Preston G.M."/>
            <person name="Zhang X.-X."/>
            <person name="Moon C.D."/>
            <person name="Gehrig S.M."/>
            <person name="Godfrey S.A.C."/>
            <person name="Knight C.G."/>
            <person name="Malone J.G."/>
            <person name="Robinson Z."/>
            <person name="Spiers A.J."/>
            <person name="Harris S."/>
            <person name="Challis G.L."/>
            <person name="Yaxley A.M."/>
            <person name="Harris D."/>
            <person name="Seeger K."/>
            <person name="Murphy L."/>
            <person name="Rutter S."/>
            <person name="Squares R."/>
            <person name="Quail M.A."/>
            <person name="Saunders E."/>
            <person name="Mavromatis K."/>
            <person name="Brettin T.S."/>
            <person name="Bentley S.D."/>
            <person name="Hothersall J."/>
            <person name="Stephens E."/>
            <person name="Thomas C.M."/>
            <person name="Parkhill J."/>
            <person name="Levy S.B."/>
            <person name="Rainey P.B."/>
            <person name="Thomson N.R."/>
        </authorList>
    </citation>
    <scope>NUCLEOTIDE SEQUENCE [LARGE SCALE GENOMIC DNA]</scope>
    <source>
        <strain>Pf0-1</strain>
    </source>
</reference>
<gene>
    <name evidence="1" type="primary">hisC2</name>
    <name type="ordered locus">Pfl01_4075</name>
</gene>
<feature type="chain" id="PRO_0000230221" description="Histidinol-phosphate aminotransferase 2">
    <location>
        <begin position="1"/>
        <end position="370"/>
    </location>
</feature>
<feature type="modified residue" description="N6-(pyridoxal phosphate)lysine" evidence="1">
    <location>
        <position position="230"/>
    </location>
</feature>
<comment type="catalytic activity">
    <reaction evidence="1">
        <text>L-histidinol phosphate + 2-oxoglutarate = 3-(imidazol-4-yl)-2-oxopropyl phosphate + L-glutamate</text>
        <dbReference type="Rhea" id="RHEA:23744"/>
        <dbReference type="ChEBI" id="CHEBI:16810"/>
        <dbReference type="ChEBI" id="CHEBI:29985"/>
        <dbReference type="ChEBI" id="CHEBI:57766"/>
        <dbReference type="ChEBI" id="CHEBI:57980"/>
        <dbReference type="EC" id="2.6.1.9"/>
    </reaction>
</comment>
<comment type="cofactor">
    <cofactor evidence="1">
        <name>pyridoxal 5'-phosphate</name>
        <dbReference type="ChEBI" id="CHEBI:597326"/>
    </cofactor>
</comment>
<comment type="pathway">
    <text evidence="1">Amino-acid biosynthesis; L-histidine biosynthesis; L-histidine from 5-phospho-alpha-D-ribose 1-diphosphate: step 7/9.</text>
</comment>
<comment type="subunit">
    <text evidence="1">Homodimer.</text>
</comment>
<comment type="similarity">
    <text evidence="1">Belongs to the class-II pyridoxal-phosphate-dependent aminotransferase family. Histidinol-phosphate aminotransferase subfamily.</text>
</comment>
<proteinExistence type="inferred from homology"/>
<protein>
    <recommendedName>
        <fullName evidence="1">Histidinol-phosphate aminotransferase 2</fullName>
        <ecNumber evidence="1">2.6.1.9</ecNumber>
    </recommendedName>
    <alternativeName>
        <fullName evidence="1">Imidazole acetol-phosphate transaminase 2</fullName>
    </alternativeName>
</protein>
<name>HIS82_PSEPF</name>
<keyword id="KW-0028">Amino-acid biosynthesis</keyword>
<keyword id="KW-0032">Aminotransferase</keyword>
<keyword id="KW-0368">Histidine biosynthesis</keyword>
<keyword id="KW-0663">Pyridoxal phosphate</keyword>
<keyword id="KW-0808">Transferase</keyword>
<organism>
    <name type="scientific">Pseudomonas fluorescens (strain Pf0-1)</name>
    <dbReference type="NCBI Taxonomy" id="205922"/>
    <lineage>
        <taxon>Bacteria</taxon>
        <taxon>Pseudomonadati</taxon>
        <taxon>Pseudomonadota</taxon>
        <taxon>Gammaproteobacteria</taxon>
        <taxon>Pseudomonadales</taxon>
        <taxon>Pseudomonadaceae</taxon>
        <taxon>Pseudomonas</taxon>
    </lineage>
</organism>
<accession>Q3K8U2</accession>